<sequence length="590" mass="66446">MATIVASKEFTGNPRRQLAKLFDVSLKLTVPDEPNVEPLIEPGKFGDYQCNNAMGLWSLIKGKGTQFRGPPAVGQALIQSLPTSEMVESCSIAGPGFVNVVLSSKWMAKSIENMLVDGIDTWAPTLSVKRAVVDFSSPNIAKEMHVGHLRSTIIGDTLARMLEYSKVEVLRRNHVGDWGTQFGMLIEFLFEKFPDTESVTETAIGDLQVFYRESKLKFDLNPEFKEKAQQAVVRLQGGDPVYRQAWAKICEISRNEFAKVYKRLRIELEEKGESFYNPYIANVIEELSSKGLVEESKGARVIFIEGFKIPLIVVKSDGGFNYASTDLTALWYRLNEEKAEWIIYVTDVGQQQHFDMFFKAARKAGWLPDDDKTYPRVSHVGFGLVLGDDNKRFRTRAAEVVRLADLLDEAKDRSKAALIERGKDKEWSPEELDQIAEAVGYGALKYADLKTNRITGYTFSFDQMLNDKGDTAVYLLYAHARICSIIRKSGKDIDELKKTGKIALDHAAERALGLHLLQFAETVEEACTTLLPNVLCKYLYYLSEEFTKFYSNCQVNGSAEETSRLLLCEATAIVMRKCFHLLGITPVYKL</sequence>
<proteinExistence type="evidence at protein level"/>
<dbReference type="EC" id="6.1.1.19" evidence="4"/>
<dbReference type="EMBL" id="Z98759">
    <property type="protein sequence ID" value="CAB11467.1"/>
    <property type="molecule type" value="Genomic_DNA"/>
</dbReference>
<dbReference type="EMBL" id="AC074025">
    <property type="protein sequence ID" value="AAG51163.1"/>
    <property type="molecule type" value="Genomic_DNA"/>
</dbReference>
<dbReference type="EMBL" id="CP002684">
    <property type="protein sequence ID" value="AEE34521.1"/>
    <property type="molecule type" value="Genomic_DNA"/>
</dbReference>
<dbReference type="EMBL" id="AF375433">
    <property type="protein sequence ID" value="AAK53017.1"/>
    <property type="molecule type" value="mRNA"/>
</dbReference>
<dbReference type="EMBL" id="AY093956">
    <property type="protein sequence ID" value="AAM16217.1"/>
    <property type="molecule type" value="mRNA"/>
</dbReference>
<dbReference type="PIR" id="A96691">
    <property type="entry name" value="A96691"/>
</dbReference>
<dbReference type="RefSeq" id="NP_176826.1">
    <property type="nucleotide sequence ID" value="NM_105324.2"/>
</dbReference>
<dbReference type="SMR" id="Q9C713"/>
<dbReference type="FunCoup" id="Q9C713">
    <property type="interactions" value="4477"/>
</dbReference>
<dbReference type="STRING" id="3702.Q9C713"/>
<dbReference type="iPTMnet" id="Q9C713"/>
<dbReference type="PaxDb" id="3702-AT1G66530.1"/>
<dbReference type="ProteomicsDB" id="233022"/>
<dbReference type="EnsemblPlants" id="AT1G66530.1">
    <property type="protein sequence ID" value="AT1G66530.1"/>
    <property type="gene ID" value="AT1G66530"/>
</dbReference>
<dbReference type="GeneID" id="842971"/>
<dbReference type="Gramene" id="AT1G66530.1">
    <property type="protein sequence ID" value="AT1G66530.1"/>
    <property type="gene ID" value="AT1G66530"/>
</dbReference>
<dbReference type="KEGG" id="ath:AT1G66530"/>
<dbReference type="Araport" id="AT1G66530"/>
<dbReference type="TAIR" id="AT1G66530"/>
<dbReference type="eggNOG" id="KOG4426">
    <property type="taxonomic scope" value="Eukaryota"/>
</dbReference>
<dbReference type="HOGENOM" id="CLU_006406_5_1_1"/>
<dbReference type="InParanoid" id="Q9C713"/>
<dbReference type="OMA" id="HHIGDWG"/>
<dbReference type="PhylomeDB" id="Q9C713"/>
<dbReference type="PRO" id="PR:Q9C713"/>
<dbReference type="Proteomes" id="UP000006548">
    <property type="component" value="Chromosome 1"/>
</dbReference>
<dbReference type="ExpressionAtlas" id="Q9C713">
    <property type="expression patterns" value="baseline and differential"/>
</dbReference>
<dbReference type="GO" id="GO:0005829">
    <property type="term" value="C:cytosol"/>
    <property type="evidence" value="ECO:0007669"/>
    <property type="project" value="UniProtKB-SubCell"/>
</dbReference>
<dbReference type="GO" id="GO:0005739">
    <property type="term" value="C:mitochondrion"/>
    <property type="evidence" value="ECO:0007005"/>
    <property type="project" value="TAIR"/>
</dbReference>
<dbReference type="GO" id="GO:0004814">
    <property type="term" value="F:arginine-tRNA ligase activity"/>
    <property type="evidence" value="ECO:0007669"/>
    <property type="project" value="UniProtKB-EC"/>
</dbReference>
<dbReference type="GO" id="GO:0005524">
    <property type="term" value="F:ATP binding"/>
    <property type="evidence" value="ECO:0007669"/>
    <property type="project" value="UniProtKB-KW"/>
</dbReference>
<dbReference type="GO" id="GO:0006420">
    <property type="term" value="P:arginyl-tRNA aminoacylation"/>
    <property type="evidence" value="ECO:0007669"/>
    <property type="project" value="InterPro"/>
</dbReference>
<dbReference type="GO" id="GO:0009791">
    <property type="term" value="P:post-embryonic development"/>
    <property type="evidence" value="ECO:0007669"/>
    <property type="project" value="UniProtKB-ARBA"/>
</dbReference>
<dbReference type="GO" id="GO:0048608">
    <property type="term" value="P:reproductive structure development"/>
    <property type="evidence" value="ECO:0007669"/>
    <property type="project" value="UniProtKB-ARBA"/>
</dbReference>
<dbReference type="CDD" id="cd00671">
    <property type="entry name" value="ArgRS_core"/>
    <property type="match status" value="1"/>
</dbReference>
<dbReference type="FunFam" id="3.40.50.620:FF:000096">
    <property type="entry name" value="Arginine--tRNA ligase chloroplastic/mitochondrial"/>
    <property type="match status" value="1"/>
</dbReference>
<dbReference type="FunFam" id="1.10.730.10:FF:000017">
    <property type="entry name" value="Arginine--tRNA ligase, chloroplastic/mitochondrial"/>
    <property type="match status" value="1"/>
</dbReference>
<dbReference type="FunFam" id="3.30.1360.70:FF:000002">
    <property type="entry name" value="arginine--tRNA ligase, cytoplasmic"/>
    <property type="match status" value="1"/>
</dbReference>
<dbReference type="Gene3D" id="3.30.1360.70">
    <property type="entry name" value="Arginyl tRNA synthetase N-terminal domain"/>
    <property type="match status" value="1"/>
</dbReference>
<dbReference type="Gene3D" id="3.40.50.620">
    <property type="entry name" value="HUPs"/>
    <property type="match status" value="1"/>
</dbReference>
<dbReference type="Gene3D" id="1.10.730.10">
    <property type="entry name" value="Isoleucyl-tRNA Synthetase, Domain 1"/>
    <property type="match status" value="1"/>
</dbReference>
<dbReference type="HAMAP" id="MF_00123">
    <property type="entry name" value="Arg_tRNA_synth"/>
    <property type="match status" value="1"/>
</dbReference>
<dbReference type="InterPro" id="IPR001412">
    <property type="entry name" value="aa-tRNA-synth_I_CS"/>
</dbReference>
<dbReference type="InterPro" id="IPR001278">
    <property type="entry name" value="Arg-tRNA-ligase"/>
</dbReference>
<dbReference type="InterPro" id="IPR005148">
    <property type="entry name" value="Arg-tRNA-synth_N"/>
</dbReference>
<dbReference type="InterPro" id="IPR036695">
    <property type="entry name" value="Arg-tRNA-synth_N_sf"/>
</dbReference>
<dbReference type="InterPro" id="IPR035684">
    <property type="entry name" value="ArgRS_core"/>
</dbReference>
<dbReference type="InterPro" id="IPR008909">
    <property type="entry name" value="DALR_anticod-bd"/>
</dbReference>
<dbReference type="InterPro" id="IPR014729">
    <property type="entry name" value="Rossmann-like_a/b/a_fold"/>
</dbReference>
<dbReference type="InterPro" id="IPR009080">
    <property type="entry name" value="tRNAsynth_Ia_anticodon-bd"/>
</dbReference>
<dbReference type="NCBIfam" id="TIGR00456">
    <property type="entry name" value="argS"/>
    <property type="match status" value="1"/>
</dbReference>
<dbReference type="PANTHER" id="PTHR11956:SF5">
    <property type="entry name" value="ARGININE--TRNA LIGASE, CYTOPLASMIC"/>
    <property type="match status" value="1"/>
</dbReference>
<dbReference type="PANTHER" id="PTHR11956">
    <property type="entry name" value="ARGINYL-TRNA SYNTHETASE"/>
    <property type="match status" value="1"/>
</dbReference>
<dbReference type="Pfam" id="PF03485">
    <property type="entry name" value="Arg_tRNA_synt_N"/>
    <property type="match status" value="1"/>
</dbReference>
<dbReference type="Pfam" id="PF05746">
    <property type="entry name" value="DALR_1"/>
    <property type="match status" value="1"/>
</dbReference>
<dbReference type="Pfam" id="PF00750">
    <property type="entry name" value="tRNA-synt_1d"/>
    <property type="match status" value="1"/>
</dbReference>
<dbReference type="PRINTS" id="PR01038">
    <property type="entry name" value="TRNASYNTHARG"/>
</dbReference>
<dbReference type="SMART" id="SM01016">
    <property type="entry name" value="Arg_tRNA_synt_N"/>
    <property type="match status" value="1"/>
</dbReference>
<dbReference type="SMART" id="SM00836">
    <property type="entry name" value="DALR_1"/>
    <property type="match status" value="1"/>
</dbReference>
<dbReference type="SUPFAM" id="SSF47323">
    <property type="entry name" value="Anticodon-binding domain of a subclass of class I aminoacyl-tRNA synthetases"/>
    <property type="match status" value="1"/>
</dbReference>
<dbReference type="SUPFAM" id="SSF55190">
    <property type="entry name" value="Arginyl-tRNA synthetase (ArgRS), N-terminal 'additional' domain"/>
    <property type="match status" value="1"/>
</dbReference>
<dbReference type="SUPFAM" id="SSF52374">
    <property type="entry name" value="Nucleotidylyl transferase"/>
    <property type="match status" value="1"/>
</dbReference>
<dbReference type="PROSITE" id="PS00178">
    <property type="entry name" value="AA_TRNA_LIGASE_I"/>
    <property type="match status" value="1"/>
</dbReference>
<name>SYRC_ARATH</name>
<protein>
    <recommendedName>
        <fullName evidence="4">Arginine--tRNA ligase, cytoplasmic</fullName>
        <ecNumber evidence="4">6.1.1.19</ecNumber>
    </recommendedName>
    <alternativeName>
        <fullName evidence="4">Arginyl-tRNA synthetase</fullName>
        <shortName evidence="4">ArgRS</shortName>
    </alternativeName>
</protein>
<comment type="function">
    <text evidence="1">Forms part of a macromolecular complex that catalyzes the attachment of specific amino acids to cognate tRNAs during protein synthesis.</text>
</comment>
<comment type="catalytic activity">
    <reaction evidence="4">
        <text>tRNA(Arg) + L-arginine + ATP = L-arginyl-tRNA(Arg) + AMP + diphosphate</text>
        <dbReference type="Rhea" id="RHEA:20301"/>
        <dbReference type="Rhea" id="RHEA-COMP:9658"/>
        <dbReference type="Rhea" id="RHEA-COMP:9673"/>
        <dbReference type="ChEBI" id="CHEBI:30616"/>
        <dbReference type="ChEBI" id="CHEBI:32682"/>
        <dbReference type="ChEBI" id="CHEBI:33019"/>
        <dbReference type="ChEBI" id="CHEBI:78442"/>
        <dbReference type="ChEBI" id="CHEBI:78513"/>
        <dbReference type="ChEBI" id="CHEBI:456215"/>
        <dbReference type="EC" id="6.1.1.19"/>
    </reaction>
</comment>
<comment type="subcellular location">
    <subcellularLocation>
        <location evidence="5 6">Cytoplasm</location>
        <location evidence="5 6">Cytosol</location>
    </subcellularLocation>
</comment>
<comment type="disruption phenotype">
    <text evidence="3">No visible phenotype under normal growth conditions.</text>
</comment>
<comment type="similarity">
    <text evidence="4">Belongs to the class-I aminoacyl-tRNA synthetase family.</text>
</comment>
<feature type="initiator methionine" description="Removed" evidence="9">
    <location>
        <position position="1"/>
    </location>
</feature>
<feature type="chain" id="PRO_0000433551" description="Arginine--tRNA ligase, cytoplasmic">
    <location>
        <begin position="2"/>
        <end position="590"/>
    </location>
</feature>
<feature type="region of interest" description="Interaction with tRNA" evidence="2">
    <location>
        <begin position="470"/>
        <end position="484"/>
    </location>
</feature>
<feature type="short sequence motif" description="'HIGH' region" evidence="4">
    <location>
        <begin position="138"/>
        <end position="149"/>
    </location>
</feature>
<feature type="binding site" evidence="1">
    <location>
        <begin position="137"/>
        <end position="139"/>
    </location>
    <ligand>
        <name>L-arginine</name>
        <dbReference type="ChEBI" id="CHEBI:32682"/>
    </ligand>
</feature>
<feature type="binding site" evidence="1">
    <location>
        <position position="148"/>
    </location>
    <ligand>
        <name>L-arginine</name>
        <dbReference type="ChEBI" id="CHEBI:32682"/>
    </ligand>
</feature>
<feature type="binding site" evidence="1">
    <location>
        <position position="322"/>
    </location>
    <ligand>
        <name>L-arginine</name>
        <dbReference type="ChEBI" id="CHEBI:32682"/>
    </ligand>
</feature>
<feature type="binding site" evidence="1">
    <location>
        <position position="326"/>
    </location>
    <ligand>
        <name>L-arginine</name>
        <dbReference type="ChEBI" id="CHEBI:32682"/>
    </ligand>
</feature>
<feature type="binding site" evidence="1">
    <location>
        <position position="350"/>
    </location>
    <ligand>
        <name>L-arginine</name>
        <dbReference type="ChEBI" id="CHEBI:32682"/>
    </ligand>
</feature>
<feature type="modified residue" description="N-acetylalanine" evidence="9">
    <location>
        <position position="2"/>
    </location>
</feature>
<feature type="sequence conflict" description="In Ref. 1; CAB11467." evidence="4" ref="1">
    <location>
        <position position="570"/>
    </location>
</feature>
<evidence type="ECO:0000250" key="1">
    <source>
        <dbReference type="UniProtKB" id="P54136"/>
    </source>
</evidence>
<evidence type="ECO:0000250" key="2">
    <source>
        <dbReference type="UniProtKB" id="Q05506"/>
    </source>
</evidence>
<evidence type="ECO:0000269" key="3">
    <source>
    </source>
</evidence>
<evidence type="ECO:0000305" key="4"/>
<evidence type="ECO:0000305" key="5">
    <source>
    </source>
</evidence>
<evidence type="ECO:0000305" key="6">
    <source>
    </source>
</evidence>
<evidence type="ECO:0000312" key="7">
    <source>
        <dbReference type="Araport" id="AT1G66530"/>
    </source>
</evidence>
<evidence type="ECO:0000312" key="8">
    <source>
        <dbReference type="EMBL" id="AAG51163.1"/>
    </source>
</evidence>
<evidence type="ECO:0007744" key="9">
    <source>
    </source>
</evidence>
<gene>
    <name evidence="7" type="ordered locus">At1g66530</name>
    <name evidence="8" type="ORF">F28G11.14</name>
</gene>
<reference key="1">
    <citation type="submission" date="1997-08" db="EMBL/GenBank/DDBJ databases">
        <title>Duplicated arginyl-tRNA synthetase genes in Arabidopsis thaliana.</title>
        <authorList>
            <person name="Small I.D."/>
            <person name="Lancelin D."/>
        </authorList>
    </citation>
    <scope>NUCLEOTIDE SEQUENCE [GENOMIC DNA]</scope>
</reference>
<reference key="2">
    <citation type="journal article" date="2000" name="Nature">
        <title>Sequence and analysis of chromosome 1 of the plant Arabidopsis thaliana.</title>
        <authorList>
            <person name="Theologis A."/>
            <person name="Ecker J.R."/>
            <person name="Palm C.J."/>
            <person name="Federspiel N.A."/>
            <person name="Kaul S."/>
            <person name="White O."/>
            <person name="Alonso J."/>
            <person name="Altafi H."/>
            <person name="Araujo R."/>
            <person name="Bowman C.L."/>
            <person name="Brooks S.Y."/>
            <person name="Buehler E."/>
            <person name="Chan A."/>
            <person name="Chao Q."/>
            <person name="Chen H."/>
            <person name="Cheuk R.F."/>
            <person name="Chin C.W."/>
            <person name="Chung M.K."/>
            <person name="Conn L."/>
            <person name="Conway A.B."/>
            <person name="Conway A.R."/>
            <person name="Creasy T.H."/>
            <person name="Dewar K."/>
            <person name="Dunn P."/>
            <person name="Etgu P."/>
            <person name="Feldblyum T.V."/>
            <person name="Feng J.-D."/>
            <person name="Fong B."/>
            <person name="Fujii C.Y."/>
            <person name="Gill J.E."/>
            <person name="Goldsmith A.D."/>
            <person name="Haas B."/>
            <person name="Hansen N.F."/>
            <person name="Hughes B."/>
            <person name="Huizar L."/>
            <person name="Hunter J.L."/>
            <person name="Jenkins J."/>
            <person name="Johnson-Hopson C."/>
            <person name="Khan S."/>
            <person name="Khaykin E."/>
            <person name="Kim C.J."/>
            <person name="Koo H.L."/>
            <person name="Kremenetskaia I."/>
            <person name="Kurtz D.B."/>
            <person name="Kwan A."/>
            <person name="Lam B."/>
            <person name="Langin-Hooper S."/>
            <person name="Lee A."/>
            <person name="Lee J.M."/>
            <person name="Lenz C.A."/>
            <person name="Li J.H."/>
            <person name="Li Y.-P."/>
            <person name="Lin X."/>
            <person name="Liu S.X."/>
            <person name="Liu Z.A."/>
            <person name="Luros J.S."/>
            <person name="Maiti R."/>
            <person name="Marziali A."/>
            <person name="Militscher J."/>
            <person name="Miranda M."/>
            <person name="Nguyen M."/>
            <person name="Nierman W.C."/>
            <person name="Osborne B.I."/>
            <person name="Pai G."/>
            <person name="Peterson J."/>
            <person name="Pham P.K."/>
            <person name="Rizzo M."/>
            <person name="Rooney T."/>
            <person name="Rowley D."/>
            <person name="Sakano H."/>
            <person name="Salzberg S.L."/>
            <person name="Schwartz J.R."/>
            <person name="Shinn P."/>
            <person name="Southwick A.M."/>
            <person name="Sun H."/>
            <person name="Tallon L.J."/>
            <person name="Tambunga G."/>
            <person name="Toriumi M.J."/>
            <person name="Town C.D."/>
            <person name="Utterback T."/>
            <person name="Van Aken S."/>
            <person name="Vaysberg M."/>
            <person name="Vysotskaia V.S."/>
            <person name="Walker M."/>
            <person name="Wu D."/>
            <person name="Yu G."/>
            <person name="Fraser C.M."/>
            <person name="Venter J.C."/>
            <person name="Davis R.W."/>
        </authorList>
    </citation>
    <scope>NUCLEOTIDE SEQUENCE [LARGE SCALE GENOMIC DNA]</scope>
    <source>
        <strain>cv. Columbia</strain>
    </source>
</reference>
<reference key="3">
    <citation type="journal article" date="2017" name="Plant J.">
        <title>Araport11: a complete reannotation of the Arabidopsis thaliana reference genome.</title>
        <authorList>
            <person name="Cheng C.Y."/>
            <person name="Krishnakumar V."/>
            <person name="Chan A.P."/>
            <person name="Thibaud-Nissen F."/>
            <person name="Schobel S."/>
            <person name="Town C.D."/>
        </authorList>
    </citation>
    <scope>GENOME REANNOTATION</scope>
    <source>
        <strain>cv. Columbia</strain>
    </source>
</reference>
<reference key="4">
    <citation type="journal article" date="2003" name="Science">
        <title>Empirical analysis of transcriptional activity in the Arabidopsis genome.</title>
        <authorList>
            <person name="Yamada K."/>
            <person name="Lim J."/>
            <person name="Dale J.M."/>
            <person name="Chen H."/>
            <person name="Shinn P."/>
            <person name="Palm C.J."/>
            <person name="Southwick A.M."/>
            <person name="Wu H.C."/>
            <person name="Kim C.J."/>
            <person name="Nguyen M."/>
            <person name="Pham P.K."/>
            <person name="Cheuk R.F."/>
            <person name="Karlin-Newmann G."/>
            <person name="Liu S.X."/>
            <person name="Lam B."/>
            <person name="Sakano H."/>
            <person name="Wu T."/>
            <person name="Yu G."/>
            <person name="Miranda M."/>
            <person name="Quach H.L."/>
            <person name="Tripp M."/>
            <person name="Chang C.H."/>
            <person name="Lee J.M."/>
            <person name="Toriumi M.J."/>
            <person name="Chan M.M."/>
            <person name="Tang C.C."/>
            <person name="Onodera C.S."/>
            <person name="Deng J.M."/>
            <person name="Akiyama K."/>
            <person name="Ansari Y."/>
            <person name="Arakawa T."/>
            <person name="Banh J."/>
            <person name="Banno F."/>
            <person name="Bowser L."/>
            <person name="Brooks S.Y."/>
            <person name="Carninci P."/>
            <person name="Chao Q."/>
            <person name="Choy N."/>
            <person name="Enju A."/>
            <person name="Goldsmith A.D."/>
            <person name="Gurjal M."/>
            <person name="Hansen N.F."/>
            <person name="Hayashizaki Y."/>
            <person name="Johnson-Hopson C."/>
            <person name="Hsuan V.W."/>
            <person name="Iida K."/>
            <person name="Karnes M."/>
            <person name="Khan S."/>
            <person name="Koesema E."/>
            <person name="Ishida J."/>
            <person name="Jiang P.X."/>
            <person name="Jones T."/>
            <person name="Kawai J."/>
            <person name="Kamiya A."/>
            <person name="Meyers C."/>
            <person name="Nakajima M."/>
            <person name="Narusaka M."/>
            <person name="Seki M."/>
            <person name="Sakurai T."/>
            <person name="Satou M."/>
            <person name="Tamse R."/>
            <person name="Vaysberg M."/>
            <person name="Wallender E.K."/>
            <person name="Wong C."/>
            <person name="Yamamura Y."/>
            <person name="Yuan S."/>
            <person name="Shinozaki K."/>
            <person name="Davis R.W."/>
            <person name="Theologis A."/>
            <person name="Ecker J.R."/>
        </authorList>
    </citation>
    <scope>NUCLEOTIDE SEQUENCE [LARGE SCALE MRNA]</scope>
    <source>
        <strain>cv. Columbia</strain>
    </source>
</reference>
<reference key="5">
    <citation type="journal article" date="2005" name="Plant J.">
        <title>Requirement of aminoacyl-tRNA synthetases for gametogenesis and embryo development in Arabidopsis.</title>
        <authorList>
            <person name="Berg M."/>
            <person name="Rogers R."/>
            <person name="Muralla R."/>
            <person name="Meinke D."/>
        </authorList>
    </citation>
    <scope>SUBCELLULAR LOCATION</scope>
    <scope>DISRUPTION PHENOTYPE</scope>
</reference>
<reference key="6">
    <citation type="journal article" date="2005" name="Proc. Natl. Acad. Sci. U.S.A.">
        <title>Dual targeting is the rule for organellar aminoacyl-tRNA synthetases in Arabidopsis thaliana.</title>
        <authorList>
            <person name="Duchene A.-M."/>
            <person name="Giritch A."/>
            <person name="Hoffmann B."/>
            <person name="Cognat V."/>
            <person name="Lancelin D."/>
            <person name="Peeters N.M."/>
            <person name="Zaepfel M."/>
            <person name="Marechal-Drouard L."/>
            <person name="Small I.D."/>
        </authorList>
    </citation>
    <scope>SUBCELLULAR LOCATION</scope>
</reference>
<reference key="7">
    <citation type="journal article" date="2012" name="Mol. Cell. Proteomics">
        <title>Comparative large-scale characterisation of plant vs. mammal proteins reveals similar and idiosyncratic N-alpha acetylation features.</title>
        <authorList>
            <person name="Bienvenut W.V."/>
            <person name="Sumpton D."/>
            <person name="Martinez A."/>
            <person name="Lilla S."/>
            <person name="Espagne C."/>
            <person name="Meinnel T."/>
            <person name="Giglione C."/>
        </authorList>
    </citation>
    <scope>ACETYLATION [LARGE SCALE ANALYSIS] AT ALA-2</scope>
    <scope>CLEAVAGE OF INITIATOR METHIONINE [LARGE SCALE ANALYSIS]</scope>
    <scope>IDENTIFICATION BY MASS SPECTROMETRY [LARGE SCALE ANALYSIS]</scope>
</reference>
<accession>Q9C713</accession>
<accession>O23246</accession>
<organism>
    <name type="scientific">Arabidopsis thaliana</name>
    <name type="common">Mouse-ear cress</name>
    <dbReference type="NCBI Taxonomy" id="3702"/>
    <lineage>
        <taxon>Eukaryota</taxon>
        <taxon>Viridiplantae</taxon>
        <taxon>Streptophyta</taxon>
        <taxon>Embryophyta</taxon>
        <taxon>Tracheophyta</taxon>
        <taxon>Spermatophyta</taxon>
        <taxon>Magnoliopsida</taxon>
        <taxon>eudicotyledons</taxon>
        <taxon>Gunneridae</taxon>
        <taxon>Pentapetalae</taxon>
        <taxon>rosids</taxon>
        <taxon>malvids</taxon>
        <taxon>Brassicales</taxon>
        <taxon>Brassicaceae</taxon>
        <taxon>Camelineae</taxon>
        <taxon>Arabidopsis</taxon>
    </lineage>
</organism>
<keyword id="KW-0007">Acetylation</keyword>
<keyword id="KW-0030">Aminoacyl-tRNA synthetase</keyword>
<keyword id="KW-0067">ATP-binding</keyword>
<keyword id="KW-0963">Cytoplasm</keyword>
<keyword id="KW-0436">Ligase</keyword>
<keyword id="KW-0547">Nucleotide-binding</keyword>
<keyword id="KW-0648">Protein biosynthesis</keyword>
<keyword id="KW-1185">Reference proteome</keyword>